<evidence type="ECO:0000250" key="1">
    <source>
        <dbReference type="UniProtKB" id="P38712"/>
    </source>
</evidence>
<evidence type="ECO:0000255" key="2">
    <source>
        <dbReference type="PROSITE-ProRule" id="PRU00541"/>
    </source>
</evidence>
<evidence type="ECO:0000255" key="3">
    <source>
        <dbReference type="PROSITE-ProRule" id="PRU00542"/>
    </source>
</evidence>
<evidence type="ECO:0000256" key="4">
    <source>
        <dbReference type="SAM" id="MobiDB-lite"/>
    </source>
</evidence>
<evidence type="ECO:0000305" key="5"/>
<name>RRP3_PICST</name>
<proteinExistence type="inferred from homology"/>
<organism>
    <name type="scientific">Scheffersomyces stipitis (strain ATCC 58785 / CBS 6054 / NBRC 10063 / NRRL Y-11545)</name>
    <name type="common">Yeast</name>
    <name type="synonym">Pichia stipitis</name>
    <dbReference type="NCBI Taxonomy" id="322104"/>
    <lineage>
        <taxon>Eukaryota</taxon>
        <taxon>Fungi</taxon>
        <taxon>Dikarya</taxon>
        <taxon>Ascomycota</taxon>
        <taxon>Saccharomycotina</taxon>
        <taxon>Pichiomycetes</taxon>
        <taxon>Debaryomycetaceae</taxon>
        <taxon>Scheffersomyces</taxon>
    </lineage>
</organism>
<feature type="chain" id="PRO_0000285150" description="ATP-dependent rRNA helicase RRP3">
    <location>
        <begin position="1"/>
        <end position="484"/>
    </location>
</feature>
<feature type="domain" description="Helicase ATP-binding" evidence="2">
    <location>
        <begin position="102"/>
        <end position="273"/>
    </location>
</feature>
<feature type="domain" description="Helicase C-terminal" evidence="3">
    <location>
        <begin position="300"/>
        <end position="444"/>
    </location>
</feature>
<feature type="region of interest" description="Disordered" evidence="4">
    <location>
        <begin position="1"/>
        <end position="61"/>
    </location>
</feature>
<feature type="region of interest" description="Disordered" evidence="4">
    <location>
        <begin position="460"/>
        <end position="484"/>
    </location>
</feature>
<feature type="short sequence motif" description="Q motif" evidence="5">
    <location>
        <begin position="71"/>
        <end position="99"/>
    </location>
</feature>
<feature type="short sequence motif" description="DEAD box" evidence="5">
    <location>
        <begin position="221"/>
        <end position="224"/>
    </location>
</feature>
<feature type="compositionally biased region" description="Polar residues" evidence="4">
    <location>
        <begin position="1"/>
        <end position="10"/>
    </location>
</feature>
<feature type="compositionally biased region" description="Basic and acidic residues" evidence="4">
    <location>
        <begin position="18"/>
        <end position="54"/>
    </location>
</feature>
<feature type="compositionally biased region" description="Basic and acidic residues" evidence="4">
    <location>
        <begin position="475"/>
        <end position="484"/>
    </location>
</feature>
<feature type="binding site" evidence="2">
    <location>
        <begin position="115"/>
        <end position="122"/>
    </location>
    <ligand>
        <name>ATP</name>
        <dbReference type="ChEBI" id="CHEBI:30616"/>
    </ligand>
</feature>
<reference key="1">
    <citation type="journal article" date="2007" name="Nat. Biotechnol.">
        <title>Genome sequence of the lignocellulose-bioconverting and xylose-fermenting yeast Pichia stipitis.</title>
        <authorList>
            <person name="Jeffries T.W."/>
            <person name="Grigoriev I.V."/>
            <person name="Grimwood J."/>
            <person name="Laplaza J.M."/>
            <person name="Aerts A."/>
            <person name="Salamov A."/>
            <person name="Schmutz J."/>
            <person name="Lindquist E."/>
            <person name="Dehal P."/>
            <person name="Shapiro H."/>
            <person name="Jin Y.-S."/>
            <person name="Passoth V."/>
            <person name="Richardson P.M."/>
        </authorList>
    </citation>
    <scope>NUCLEOTIDE SEQUENCE [LARGE SCALE GENOMIC DNA]</scope>
    <source>
        <strain>ATCC 58785 / CBS 6054 / NBRC 10063 / NRRL Y-11545</strain>
    </source>
</reference>
<sequence length="484" mass="54357">MAIVGSNSVSKKPKHTKRNDARDLAEKIKRNALKKQEQDKKQQLEEESKPESSQKSKNIVEVNPDDEVKFSTFSELKLVPELLEAIQQMKFSKPTPIQSEAIPHALEGKDIIGLAQTGSGKTAAFAIPILQSLWEAQTPYFGLVLAPARELAYQIKETFDALGSTMGVRTVCLVGGMDMMDQARDLMRKPHIIIATPGRIMDHLEHTKGFSLKMLKYFVMDEADKLLDLEFGPVLDKILKQIPSKRTTYLFSATMTNKIEKLQRASLHNPVRVAVSSKYQTADNLIQSMMLVSDGYKNTYLIHLLNEFVGKSIIIFARTRAHTQRTSILCRILGFSAVPLHGDLTQAQRLGSLNKFKSGTANILIATDVAARGLDIPSVDVVINYDIPTDSKAYVHRVGRTARAGRSGKSISLVTQYDLEMYLRIEQSIQKKLPKDPSPPKAMLDALHVHVDRAYAEAIRQTKEFHEKTRRGRRGKDDKDREEH</sequence>
<dbReference type="EC" id="3.6.4.13" evidence="1"/>
<dbReference type="EMBL" id="CP000497">
    <property type="protein sequence ID" value="ABN65488.2"/>
    <property type="status" value="ALT_INIT"/>
    <property type="molecule type" value="Genomic_DNA"/>
</dbReference>
<dbReference type="RefSeq" id="XP_001383517.2">
    <property type="nucleotide sequence ID" value="XM_001383480.1"/>
</dbReference>
<dbReference type="SMR" id="A3LS22"/>
<dbReference type="FunCoup" id="A3LS22">
    <property type="interactions" value="1178"/>
</dbReference>
<dbReference type="STRING" id="322104.A3LS22"/>
<dbReference type="GeneID" id="4838114"/>
<dbReference type="KEGG" id="pic:PICST_57234"/>
<dbReference type="eggNOG" id="KOG0330">
    <property type="taxonomic scope" value="Eukaryota"/>
</dbReference>
<dbReference type="HOGENOM" id="CLU_003041_1_1_1"/>
<dbReference type="InParanoid" id="A3LS22"/>
<dbReference type="OrthoDB" id="10261904at2759"/>
<dbReference type="Proteomes" id="UP000002258">
    <property type="component" value="Chromosome 3"/>
</dbReference>
<dbReference type="GO" id="GO:0005829">
    <property type="term" value="C:cytosol"/>
    <property type="evidence" value="ECO:0007669"/>
    <property type="project" value="TreeGrafter"/>
</dbReference>
<dbReference type="GO" id="GO:0005634">
    <property type="term" value="C:nucleus"/>
    <property type="evidence" value="ECO:0007669"/>
    <property type="project" value="UniProtKB-SubCell"/>
</dbReference>
<dbReference type="GO" id="GO:0005524">
    <property type="term" value="F:ATP binding"/>
    <property type="evidence" value="ECO:0007669"/>
    <property type="project" value="UniProtKB-KW"/>
</dbReference>
<dbReference type="GO" id="GO:0016887">
    <property type="term" value="F:ATP hydrolysis activity"/>
    <property type="evidence" value="ECO:0007669"/>
    <property type="project" value="RHEA"/>
</dbReference>
<dbReference type="GO" id="GO:0003723">
    <property type="term" value="F:RNA binding"/>
    <property type="evidence" value="ECO:0007669"/>
    <property type="project" value="UniProtKB-KW"/>
</dbReference>
<dbReference type="GO" id="GO:0003724">
    <property type="term" value="F:RNA helicase activity"/>
    <property type="evidence" value="ECO:0007669"/>
    <property type="project" value="UniProtKB-EC"/>
</dbReference>
<dbReference type="GO" id="GO:0006364">
    <property type="term" value="P:rRNA processing"/>
    <property type="evidence" value="ECO:0007669"/>
    <property type="project" value="UniProtKB-KW"/>
</dbReference>
<dbReference type="CDD" id="cd17954">
    <property type="entry name" value="DEADc_DDX47"/>
    <property type="match status" value="1"/>
</dbReference>
<dbReference type="CDD" id="cd18787">
    <property type="entry name" value="SF2_C_DEAD"/>
    <property type="match status" value="1"/>
</dbReference>
<dbReference type="Gene3D" id="3.40.50.300">
    <property type="entry name" value="P-loop containing nucleotide triphosphate hydrolases"/>
    <property type="match status" value="2"/>
</dbReference>
<dbReference type="InterPro" id="IPR044765">
    <property type="entry name" value="DDX47/Rrp3_DEADc"/>
</dbReference>
<dbReference type="InterPro" id="IPR011545">
    <property type="entry name" value="DEAD/DEAH_box_helicase_dom"/>
</dbReference>
<dbReference type="InterPro" id="IPR050079">
    <property type="entry name" value="DEAD_box_RNA_helicase"/>
</dbReference>
<dbReference type="InterPro" id="IPR014001">
    <property type="entry name" value="Helicase_ATP-bd"/>
</dbReference>
<dbReference type="InterPro" id="IPR001650">
    <property type="entry name" value="Helicase_C-like"/>
</dbReference>
<dbReference type="InterPro" id="IPR027417">
    <property type="entry name" value="P-loop_NTPase"/>
</dbReference>
<dbReference type="InterPro" id="IPR000629">
    <property type="entry name" value="RNA-helicase_DEAD-box_CS"/>
</dbReference>
<dbReference type="InterPro" id="IPR014014">
    <property type="entry name" value="RNA_helicase_DEAD_Q_motif"/>
</dbReference>
<dbReference type="PANTHER" id="PTHR47959:SF24">
    <property type="entry name" value="ATP-DEPENDENT RNA HELICASE"/>
    <property type="match status" value="1"/>
</dbReference>
<dbReference type="PANTHER" id="PTHR47959">
    <property type="entry name" value="ATP-DEPENDENT RNA HELICASE RHLE-RELATED"/>
    <property type="match status" value="1"/>
</dbReference>
<dbReference type="Pfam" id="PF00270">
    <property type="entry name" value="DEAD"/>
    <property type="match status" value="1"/>
</dbReference>
<dbReference type="Pfam" id="PF00271">
    <property type="entry name" value="Helicase_C"/>
    <property type="match status" value="1"/>
</dbReference>
<dbReference type="SMART" id="SM00487">
    <property type="entry name" value="DEXDc"/>
    <property type="match status" value="1"/>
</dbReference>
<dbReference type="SMART" id="SM00490">
    <property type="entry name" value="HELICc"/>
    <property type="match status" value="1"/>
</dbReference>
<dbReference type="SUPFAM" id="SSF52540">
    <property type="entry name" value="P-loop containing nucleoside triphosphate hydrolases"/>
    <property type="match status" value="1"/>
</dbReference>
<dbReference type="PROSITE" id="PS00039">
    <property type="entry name" value="DEAD_ATP_HELICASE"/>
    <property type="match status" value="1"/>
</dbReference>
<dbReference type="PROSITE" id="PS51192">
    <property type="entry name" value="HELICASE_ATP_BIND_1"/>
    <property type="match status" value="1"/>
</dbReference>
<dbReference type="PROSITE" id="PS51194">
    <property type="entry name" value="HELICASE_CTER"/>
    <property type="match status" value="1"/>
</dbReference>
<dbReference type="PROSITE" id="PS51195">
    <property type="entry name" value="Q_MOTIF"/>
    <property type="match status" value="1"/>
</dbReference>
<gene>
    <name evidence="1" type="primary">RRP3</name>
    <name type="ORF">PICST_57234</name>
</gene>
<comment type="function">
    <text evidence="1">ATP-dependent rRNA helicase required for pre-ribosomal RNA processing. Involved in the maturation of the 35S-pre-rRNA and to its cleavage to mature 18S rRNA.</text>
</comment>
<comment type="catalytic activity">
    <reaction evidence="1">
        <text>ATP + H2O = ADP + phosphate + H(+)</text>
        <dbReference type="Rhea" id="RHEA:13065"/>
        <dbReference type="ChEBI" id="CHEBI:15377"/>
        <dbReference type="ChEBI" id="CHEBI:15378"/>
        <dbReference type="ChEBI" id="CHEBI:30616"/>
        <dbReference type="ChEBI" id="CHEBI:43474"/>
        <dbReference type="ChEBI" id="CHEBI:456216"/>
        <dbReference type="EC" id="3.6.4.13"/>
    </reaction>
</comment>
<comment type="subunit">
    <text evidence="1">Interacts with the SSU processome.</text>
</comment>
<comment type="subcellular location">
    <subcellularLocation>
        <location evidence="5">Nucleus</location>
    </subcellularLocation>
</comment>
<comment type="domain">
    <text evidence="5">The Q motif is unique to and characteristic of the DEAD box family of RNA helicases and controls ATP binding and hydrolysis.</text>
</comment>
<comment type="similarity">
    <text evidence="5">Belongs to the DEAD box helicase family. DDX47/RRP3 subfamily.</text>
</comment>
<comment type="sequence caution" evidence="5">
    <conflict type="erroneous initiation">
        <sequence resource="EMBL-CDS" id="ABN65488"/>
    </conflict>
</comment>
<protein>
    <recommendedName>
        <fullName evidence="5">ATP-dependent rRNA helicase RRP3</fullName>
        <ecNumber evidence="1">3.6.4.13</ecNumber>
    </recommendedName>
</protein>
<keyword id="KW-0067">ATP-binding</keyword>
<keyword id="KW-0347">Helicase</keyword>
<keyword id="KW-0378">Hydrolase</keyword>
<keyword id="KW-0547">Nucleotide-binding</keyword>
<keyword id="KW-0539">Nucleus</keyword>
<keyword id="KW-1185">Reference proteome</keyword>
<keyword id="KW-0690">Ribosome biogenesis</keyword>
<keyword id="KW-0694">RNA-binding</keyword>
<keyword id="KW-0698">rRNA processing</keyword>
<accession>A3LS22</accession>